<comment type="function">
    <text evidence="2">Thiol-specific peroxidase that catalyzes the reduction of hydrogen peroxide and organic hydroperoxides to water and alcohols, respectively. Plays a role in cell protection against oxidative stress by detoxifying peroxides.</text>
</comment>
<comment type="catalytic activity">
    <reaction evidence="2">
        <text>a hydroperoxide + [thioredoxin]-dithiol = an alcohol + [thioredoxin]-disulfide + H2O</text>
        <dbReference type="Rhea" id="RHEA:62620"/>
        <dbReference type="Rhea" id="RHEA-COMP:10698"/>
        <dbReference type="Rhea" id="RHEA-COMP:10700"/>
        <dbReference type="ChEBI" id="CHEBI:15377"/>
        <dbReference type="ChEBI" id="CHEBI:29950"/>
        <dbReference type="ChEBI" id="CHEBI:30879"/>
        <dbReference type="ChEBI" id="CHEBI:35924"/>
        <dbReference type="ChEBI" id="CHEBI:50058"/>
        <dbReference type="EC" id="1.11.1.24"/>
    </reaction>
</comment>
<comment type="subunit">
    <text evidence="2">Homodimer.</text>
</comment>
<comment type="miscellaneous">
    <text evidence="2">The active site is a conserved redox-active cysteine residue, the peroxidatic cysteine (C(P)), which makes the nucleophilic attack on the peroxide substrate. The peroxide oxidizes the C(P)-SH to cysteine sulfenic acid (C(P)-SOH), which then reacts with another cysteine residue, the resolving cysteine (C(R)), to form a disulfide bridge. The disulfide is subsequently reduced by an appropriate electron donor to complete the catalytic cycle. In this atypical 2-Cys peroxiredoxin, C(R) is present in the same subunit to form an intramolecular disulfide. The disulfide is subsequently reduced by thioredoxin.</text>
</comment>
<comment type="similarity">
    <text evidence="2">Belongs to the peroxiredoxin family. Tpx subfamily.</text>
</comment>
<protein>
    <recommendedName>
        <fullName evidence="2">Thiol peroxidase</fullName>
        <shortName evidence="2">Tpx</shortName>
        <ecNumber evidence="2">1.11.1.24</ecNumber>
    </recommendedName>
    <alternativeName>
        <fullName evidence="2">Peroxiredoxin tpx</fullName>
        <shortName evidence="2">Prx</shortName>
    </alternativeName>
    <alternativeName>
        <fullName evidence="2">Thioredoxin peroxidase</fullName>
    </alternativeName>
    <alternativeName>
        <fullName evidence="2">Thioredoxin-dependent peroxiredoxin</fullName>
    </alternativeName>
</protein>
<name>TPX_SHIDY</name>
<evidence type="ECO:0000250" key="1"/>
<evidence type="ECO:0000255" key="2">
    <source>
        <dbReference type="HAMAP-Rule" id="MF_00269"/>
    </source>
</evidence>
<dbReference type="EC" id="1.11.1.24" evidence="2"/>
<dbReference type="EMBL" id="AF153317">
    <property type="protein sequence ID" value="AAF28134.1"/>
    <property type="molecule type" value="Genomic_DNA"/>
</dbReference>
<dbReference type="RefSeq" id="WP_000084387.1">
    <property type="nucleotide sequence ID" value="NZ_UYIS01000021.1"/>
</dbReference>
<dbReference type="SMR" id="P0A866"/>
<dbReference type="PeroxiBase" id="6004">
    <property type="entry name" value="SdyTPx01"/>
</dbReference>
<dbReference type="GeneID" id="75203439"/>
<dbReference type="OMA" id="ITQEPNY"/>
<dbReference type="GO" id="GO:0008379">
    <property type="term" value="F:thioredoxin peroxidase activity"/>
    <property type="evidence" value="ECO:0007669"/>
    <property type="project" value="UniProtKB-UniRule"/>
</dbReference>
<dbReference type="CDD" id="cd03014">
    <property type="entry name" value="PRX_Atyp2cys"/>
    <property type="match status" value="1"/>
</dbReference>
<dbReference type="FunFam" id="3.40.30.10:FF:000056">
    <property type="entry name" value="Thiol peroxidase"/>
    <property type="match status" value="1"/>
</dbReference>
<dbReference type="Gene3D" id="3.40.30.10">
    <property type="entry name" value="Glutaredoxin"/>
    <property type="match status" value="1"/>
</dbReference>
<dbReference type="HAMAP" id="MF_00269">
    <property type="entry name" value="Tpx"/>
    <property type="match status" value="1"/>
</dbReference>
<dbReference type="InterPro" id="IPR013740">
    <property type="entry name" value="Redoxin"/>
</dbReference>
<dbReference type="InterPro" id="IPR036249">
    <property type="entry name" value="Thioredoxin-like_sf"/>
</dbReference>
<dbReference type="InterPro" id="IPR013766">
    <property type="entry name" value="Thioredoxin_domain"/>
</dbReference>
<dbReference type="InterPro" id="IPR002065">
    <property type="entry name" value="TPX"/>
</dbReference>
<dbReference type="InterPro" id="IPR018219">
    <property type="entry name" value="Tpx_CS"/>
</dbReference>
<dbReference type="InterPro" id="IPR050455">
    <property type="entry name" value="Tpx_Peroxidase_subfamily"/>
</dbReference>
<dbReference type="NCBIfam" id="NF001808">
    <property type="entry name" value="PRK00522.1"/>
    <property type="match status" value="1"/>
</dbReference>
<dbReference type="PANTHER" id="PTHR43110">
    <property type="entry name" value="THIOL PEROXIDASE"/>
    <property type="match status" value="1"/>
</dbReference>
<dbReference type="PANTHER" id="PTHR43110:SF1">
    <property type="entry name" value="THIOL PEROXIDASE"/>
    <property type="match status" value="1"/>
</dbReference>
<dbReference type="Pfam" id="PF08534">
    <property type="entry name" value="Redoxin"/>
    <property type="match status" value="1"/>
</dbReference>
<dbReference type="SUPFAM" id="SSF52833">
    <property type="entry name" value="Thioredoxin-like"/>
    <property type="match status" value="1"/>
</dbReference>
<dbReference type="PROSITE" id="PS51352">
    <property type="entry name" value="THIOREDOXIN_2"/>
    <property type="match status" value="1"/>
</dbReference>
<dbReference type="PROSITE" id="PS01265">
    <property type="entry name" value="TPX"/>
    <property type="match status" value="1"/>
</dbReference>
<proteinExistence type="inferred from homology"/>
<reference key="1">
    <citation type="journal article" date="1999" name="Mol. Microbiol.">
        <title>Spontaneous tandem amplification and deletion of the Shiga toxin operon in Shigella dysenteriae 1.</title>
        <authorList>
            <person name="McDonough M.A."/>
            <person name="Butterton J.R."/>
        </authorList>
    </citation>
    <scope>NUCLEOTIDE SEQUENCE [GENOMIC DNA]</scope>
    <source>
        <strain>3818 / Type 1</strain>
    </source>
</reference>
<organism>
    <name type="scientific">Shigella dysenteriae</name>
    <dbReference type="NCBI Taxonomy" id="622"/>
    <lineage>
        <taxon>Bacteria</taxon>
        <taxon>Pseudomonadati</taxon>
        <taxon>Pseudomonadota</taxon>
        <taxon>Gammaproteobacteria</taxon>
        <taxon>Enterobacterales</taxon>
        <taxon>Enterobacteriaceae</taxon>
        <taxon>Shigella</taxon>
    </lineage>
</organism>
<feature type="initiator methionine" description="Removed" evidence="1">
    <location>
        <position position="1"/>
    </location>
</feature>
<feature type="chain" id="PRO_0000187896" description="Thiol peroxidase">
    <location>
        <begin position="2"/>
        <end position="168"/>
    </location>
</feature>
<feature type="domain" description="Thioredoxin" evidence="2">
    <location>
        <begin position="19"/>
        <end position="168"/>
    </location>
</feature>
<feature type="active site" description="Cysteine sulfenic acid (-SOH) intermediate" evidence="2">
    <location>
        <position position="61"/>
    </location>
</feature>
<feature type="disulfide bond" description="Redox-active" evidence="2">
    <location>
        <begin position="61"/>
        <end position="95"/>
    </location>
</feature>
<sequence length="168" mass="17835">MSQTVHFQGNPVTVANSIPQAGSKAQTFTLVAKDLSDVTLGQFAGKRKVLNIFPSIDTGVCAASVRKFNQLATEIDNTVVLCISADLPFAQSRFCGAEGLNNVITLSTFRNAEFLQAYGVAIADGPLKGLAARAVVVIDENDNVIFSQLVDEITTEPDYEAALAVLKA</sequence>
<accession>P0A866</accession>
<accession>P37901</accession>
<accession>P57669</accession>
<accession>P76047</accession>
<accession>P77786</accession>
<keyword id="KW-0049">Antioxidant</keyword>
<keyword id="KW-1015">Disulfide bond</keyword>
<keyword id="KW-0560">Oxidoreductase</keyword>
<keyword id="KW-0575">Peroxidase</keyword>
<keyword id="KW-0676">Redox-active center</keyword>
<gene>
    <name evidence="2" type="primary">tpx</name>
</gene>